<name>TPIS_BACCE</name>
<accession>Q4MQ55</accession>
<accession>P83069</accession>
<accession>Q8RQH4</accession>
<organism>
    <name type="scientific">Bacillus cereus</name>
    <dbReference type="NCBI Taxonomy" id="1396"/>
    <lineage>
        <taxon>Bacteria</taxon>
        <taxon>Bacillati</taxon>
        <taxon>Bacillota</taxon>
        <taxon>Bacilli</taxon>
        <taxon>Bacillales</taxon>
        <taxon>Bacillaceae</taxon>
        <taxon>Bacillus</taxon>
        <taxon>Bacillus cereus group</taxon>
    </lineage>
</organism>
<comment type="function">
    <text evidence="1">Involved in the gluconeogenesis. Catalyzes stereospecifically the conversion of dihydroxyacetone phosphate (DHAP) to D-glyceraldehyde-3-phosphate (G3P).</text>
</comment>
<comment type="catalytic activity">
    <reaction evidence="1">
        <text>D-glyceraldehyde 3-phosphate = dihydroxyacetone phosphate</text>
        <dbReference type="Rhea" id="RHEA:18585"/>
        <dbReference type="ChEBI" id="CHEBI:57642"/>
        <dbReference type="ChEBI" id="CHEBI:59776"/>
        <dbReference type="EC" id="5.3.1.1"/>
    </reaction>
</comment>
<comment type="pathway">
    <text evidence="1">Carbohydrate biosynthesis; gluconeogenesis.</text>
</comment>
<comment type="pathway">
    <text evidence="1">Carbohydrate degradation; glycolysis; D-glyceraldehyde 3-phosphate from glycerone phosphate: step 1/1.</text>
</comment>
<comment type="subunit">
    <text evidence="1">Homodimer.</text>
</comment>
<comment type="subcellular location">
    <subcellularLocation>
        <location evidence="1">Cytoplasm</location>
    </subcellularLocation>
</comment>
<comment type="induction">
    <text evidence="2">By salt stress and heat shock.</text>
</comment>
<comment type="similarity">
    <text evidence="1">Belongs to the triosephosphate isomerase family.</text>
</comment>
<comment type="sequence caution" evidence="3">
    <conflict type="erroneous initiation">
        <sequence resource="EMBL-CDS" id="EAL14302"/>
    </conflict>
</comment>
<proteinExistence type="evidence at protein level"/>
<gene>
    <name evidence="1" type="primary">tpiA</name>
    <name type="synonym">tim</name>
    <name type="ORF">BCE_G9241_5215</name>
</gene>
<feature type="chain" id="PRO_0000271233" description="Triosephosphate isomerase">
    <location>
        <begin position="1"/>
        <end position="251"/>
    </location>
</feature>
<feature type="active site" description="Electrophile" evidence="1">
    <location>
        <position position="95"/>
    </location>
</feature>
<feature type="active site" description="Proton acceptor" evidence="1">
    <location>
        <position position="167"/>
    </location>
</feature>
<feature type="binding site" evidence="1">
    <location>
        <begin position="9"/>
        <end position="11"/>
    </location>
    <ligand>
        <name>substrate</name>
    </ligand>
</feature>
<feature type="binding site" evidence="1">
    <location>
        <position position="173"/>
    </location>
    <ligand>
        <name>substrate</name>
    </ligand>
</feature>
<feature type="binding site" evidence="1">
    <location>
        <position position="213"/>
    </location>
    <ligand>
        <name>substrate</name>
    </ligand>
</feature>
<feature type="binding site" evidence="1">
    <location>
        <begin position="234"/>
        <end position="235"/>
    </location>
    <ligand>
        <name>substrate</name>
    </ligand>
</feature>
<feature type="modified residue" description="Phosphoserine" evidence="1">
    <location>
        <position position="213"/>
    </location>
</feature>
<dbReference type="EC" id="5.3.1.1" evidence="1"/>
<dbReference type="EMBL" id="AAEK01000016">
    <property type="protein sequence ID" value="EAL14302.1"/>
    <property type="status" value="ALT_INIT"/>
    <property type="molecule type" value="Genomic_DNA"/>
</dbReference>
<dbReference type="EMBL" id="AB083542">
    <property type="protein sequence ID" value="BAB88970.1"/>
    <property type="molecule type" value="Genomic_DNA"/>
</dbReference>
<dbReference type="RefSeq" id="WP_001231038.1">
    <property type="nucleotide sequence ID" value="NZ_WBPP01000004.1"/>
</dbReference>
<dbReference type="SMR" id="Q4MQ55"/>
<dbReference type="GeneID" id="93005983"/>
<dbReference type="eggNOG" id="COG0149">
    <property type="taxonomic scope" value="Bacteria"/>
</dbReference>
<dbReference type="OMA" id="NWKMHMT"/>
<dbReference type="UniPathway" id="UPA00109">
    <property type="reaction ID" value="UER00189"/>
</dbReference>
<dbReference type="UniPathway" id="UPA00138"/>
<dbReference type="GO" id="GO:0005829">
    <property type="term" value="C:cytosol"/>
    <property type="evidence" value="ECO:0007669"/>
    <property type="project" value="TreeGrafter"/>
</dbReference>
<dbReference type="GO" id="GO:0004807">
    <property type="term" value="F:triose-phosphate isomerase activity"/>
    <property type="evidence" value="ECO:0007669"/>
    <property type="project" value="UniProtKB-UniRule"/>
</dbReference>
<dbReference type="GO" id="GO:0006094">
    <property type="term" value="P:gluconeogenesis"/>
    <property type="evidence" value="ECO:0007669"/>
    <property type="project" value="UniProtKB-UniRule"/>
</dbReference>
<dbReference type="GO" id="GO:0046166">
    <property type="term" value="P:glyceraldehyde-3-phosphate biosynthetic process"/>
    <property type="evidence" value="ECO:0007669"/>
    <property type="project" value="TreeGrafter"/>
</dbReference>
<dbReference type="GO" id="GO:0019563">
    <property type="term" value="P:glycerol catabolic process"/>
    <property type="evidence" value="ECO:0007669"/>
    <property type="project" value="TreeGrafter"/>
</dbReference>
<dbReference type="GO" id="GO:0006096">
    <property type="term" value="P:glycolytic process"/>
    <property type="evidence" value="ECO:0007669"/>
    <property type="project" value="UniProtKB-UniRule"/>
</dbReference>
<dbReference type="CDD" id="cd00311">
    <property type="entry name" value="TIM"/>
    <property type="match status" value="1"/>
</dbReference>
<dbReference type="FunFam" id="3.20.20.70:FF:000016">
    <property type="entry name" value="Triosephosphate isomerase"/>
    <property type="match status" value="1"/>
</dbReference>
<dbReference type="Gene3D" id="3.20.20.70">
    <property type="entry name" value="Aldolase class I"/>
    <property type="match status" value="1"/>
</dbReference>
<dbReference type="HAMAP" id="MF_00147_B">
    <property type="entry name" value="TIM_B"/>
    <property type="match status" value="1"/>
</dbReference>
<dbReference type="InterPro" id="IPR013785">
    <property type="entry name" value="Aldolase_TIM"/>
</dbReference>
<dbReference type="InterPro" id="IPR035990">
    <property type="entry name" value="TIM_sf"/>
</dbReference>
<dbReference type="InterPro" id="IPR022896">
    <property type="entry name" value="TrioseP_Isoase_bac/euk"/>
</dbReference>
<dbReference type="InterPro" id="IPR000652">
    <property type="entry name" value="Triosephosphate_isomerase"/>
</dbReference>
<dbReference type="InterPro" id="IPR020861">
    <property type="entry name" value="Triosephosphate_isomerase_AS"/>
</dbReference>
<dbReference type="NCBIfam" id="TIGR00419">
    <property type="entry name" value="tim"/>
    <property type="match status" value="1"/>
</dbReference>
<dbReference type="PANTHER" id="PTHR21139">
    <property type="entry name" value="TRIOSEPHOSPHATE ISOMERASE"/>
    <property type="match status" value="1"/>
</dbReference>
<dbReference type="PANTHER" id="PTHR21139:SF42">
    <property type="entry name" value="TRIOSEPHOSPHATE ISOMERASE"/>
    <property type="match status" value="1"/>
</dbReference>
<dbReference type="Pfam" id="PF00121">
    <property type="entry name" value="TIM"/>
    <property type="match status" value="1"/>
</dbReference>
<dbReference type="SUPFAM" id="SSF51351">
    <property type="entry name" value="Triosephosphate isomerase (TIM)"/>
    <property type="match status" value="1"/>
</dbReference>
<dbReference type="PROSITE" id="PS00171">
    <property type="entry name" value="TIM_1"/>
    <property type="match status" value="1"/>
</dbReference>
<dbReference type="PROSITE" id="PS51440">
    <property type="entry name" value="TIM_2"/>
    <property type="match status" value="1"/>
</dbReference>
<reference key="1">
    <citation type="journal article" date="2004" name="Proc. Natl. Acad. Sci. U.S.A.">
        <title>Identification of anthrax toxin genes in a Bacillus cereus associated with an illness resembling inhalation anthrax.</title>
        <authorList>
            <person name="Hoffmaster A.R."/>
            <person name="Ravel J."/>
            <person name="Rasko D.A."/>
            <person name="Chapman G.D."/>
            <person name="Chute M.D."/>
            <person name="Marston C.K."/>
            <person name="De B.K."/>
            <person name="Sacchi C.T."/>
            <person name="Fitzgerald C."/>
            <person name="Mayer L.W."/>
            <person name="Maiden M.C.J."/>
            <person name="Priest F.G."/>
            <person name="Barker M."/>
            <person name="Jiang L."/>
            <person name="Cer R.Z."/>
            <person name="Rilstone J."/>
            <person name="Peterson S.N."/>
            <person name="Weyant R.S."/>
            <person name="Galloway D.R."/>
            <person name="Read T.D."/>
            <person name="Popovic T."/>
            <person name="Fraser C.M."/>
        </authorList>
    </citation>
    <scope>NUCLEOTIDE SEQUENCE [GENOMIC DNA]</scope>
    <source>
        <strain>G9241</strain>
    </source>
</reference>
<reference key="2">
    <citation type="submission" date="2002-04" db="EMBL/GenBank/DDBJ databases">
        <authorList>
            <person name="Nishizawa M."/>
            <person name="Itoi Y."/>
            <person name="Ito S."/>
            <person name="Inoue M."/>
        </authorList>
    </citation>
    <scope>NUCLEOTIDE SEQUENCE [GENOMIC DNA] OF 1-141</scope>
    <source>
        <strain>Tim-r01</strain>
    </source>
</reference>
<reference key="3">
    <citation type="journal article" date="2001" name="J. Appl. Microbiol.">
        <title>Heat and salt stress in the food pathogen Bacillus cereus.</title>
        <authorList>
            <person name="Browne N."/>
            <person name="Dowds B.C.A."/>
        </authorList>
    </citation>
    <scope>PROTEIN SEQUENCE OF 1-15</scope>
    <scope>INDUCTION</scope>
    <source>
        <strain>DSM 626 / NCIMB 11796 / T</strain>
    </source>
</reference>
<sequence>MRKPIIAGNWKMNKTLSEAVSFVEEVKGQIPAASAVDAVVCSPALFLERLVAATEGTDLQVGAQNMHFEKNGAFTGEISPVALSDLKVGYVVLGHSERREMFAETDESVNKKTIAAFEHGLTPIVCCGETLEERESGKTFDLVAGQVTKALAGLTEEQVKATVIAYEPIWAIGTGKSSSSADANEVCAHIRKVVAEAVSPEAAEAVRIQYGGSVKPENIKEYMAQSDIDGALVGGASLEPASFLGLLGAVK</sequence>
<protein>
    <recommendedName>
        <fullName evidence="1">Triosephosphate isomerase</fullName>
        <shortName evidence="1">TIM</shortName>
        <shortName evidence="1">TPI</shortName>
        <ecNumber evidence="1">5.3.1.1</ecNumber>
    </recommendedName>
    <alternativeName>
        <fullName evidence="1">Triose-phosphate isomerase</fullName>
    </alternativeName>
</protein>
<keyword id="KW-0963">Cytoplasm</keyword>
<keyword id="KW-0903">Direct protein sequencing</keyword>
<keyword id="KW-0312">Gluconeogenesis</keyword>
<keyword id="KW-0324">Glycolysis</keyword>
<keyword id="KW-0413">Isomerase</keyword>
<keyword id="KW-0597">Phosphoprotein</keyword>
<keyword id="KW-0346">Stress response</keyword>
<evidence type="ECO:0000255" key="1">
    <source>
        <dbReference type="HAMAP-Rule" id="MF_00147"/>
    </source>
</evidence>
<evidence type="ECO:0000269" key="2">
    <source>
    </source>
</evidence>
<evidence type="ECO:0000305" key="3"/>